<name>PCKGC_CHICK</name>
<proteinExistence type="evidence at transcript level"/>
<comment type="function">
    <text evidence="2">Regulates cataplerosis and anaplerosis, the processes that control the levels of metabolic intermediates in the citric acid cycle. At low glucose levels, it catalyzes the cataplerotic conversion of oxaloacetate (OAA) to phosphoenolpyruvate (PEP), the rate-limiting step in the metabolic pathway that produces glucose from lactate and other precursors derived from the citric acid cycle. At high glucose levels, it catalyzes the anaplerotic conversion of phosphoenolpyruvate to oxaloacetate. In addition to the phosphoenolpyruvate carboxykinase activity, also acts as a protein kinase when phosphorylated at Ser-90: phosphorylation at Ser-90 reduces the binding affinity to oxaloacetate and promotes an atypical serine protein kinase activity using GTP as donor.</text>
</comment>
<comment type="catalytic activity">
    <reaction evidence="2">
        <text>oxaloacetate + GTP = phosphoenolpyruvate + GDP + CO2</text>
        <dbReference type="Rhea" id="RHEA:10388"/>
        <dbReference type="ChEBI" id="CHEBI:16452"/>
        <dbReference type="ChEBI" id="CHEBI:16526"/>
        <dbReference type="ChEBI" id="CHEBI:37565"/>
        <dbReference type="ChEBI" id="CHEBI:58189"/>
        <dbReference type="ChEBI" id="CHEBI:58702"/>
        <dbReference type="EC" id="4.1.1.32"/>
    </reaction>
    <physiologicalReaction direction="left-to-right" evidence="2">
        <dbReference type="Rhea" id="RHEA:10389"/>
    </physiologicalReaction>
    <physiologicalReaction direction="right-to-left" evidence="2">
        <dbReference type="Rhea" id="RHEA:10390"/>
    </physiologicalReaction>
</comment>
<comment type="catalytic activity">
    <reaction evidence="2">
        <text>L-seryl-[protein] + GTP = O-phospho-L-seryl-[protein] + GDP + H(+)</text>
        <dbReference type="Rhea" id="RHEA:64020"/>
        <dbReference type="Rhea" id="RHEA-COMP:9863"/>
        <dbReference type="Rhea" id="RHEA-COMP:11604"/>
        <dbReference type="ChEBI" id="CHEBI:15378"/>
        <dbReference type="ChEBI" id="CHEBI:29999"/>
        <dbReference type="ChEBI" id="CHEBI:37565"/>
        <dbReference type="ChEBI" id="CHEBI:58189"/>
        <dbReference type="ChEBI" id="CHEBI:83421"/>
    </reaction>
    <physiologicalReaction direction="left-to-right" evidence="2">
        <dbReference type="Rhea" id="RHEA:64021"/>
    </physiologicalReaction>
</comment>
<comment type="cofactor">
    <cofactor evidence="2">
        <name>Mn(2+)</name>
        <dbReference type="ChEBI" id="CHEBI:29035"/>
    </cofactor>
    <text evidence="2">Binds 1 Mn(2+) ion per subunit.</text>
</comment>
<comment type="activity regulation">
    <text evidence="2">Phosphoenolpyruvate carboxykinase activity is regulated by glucose levels (By similarity). Phosphorylation at Ser-90 reduces the binding affinity to oxaloacetate and converts the enzyme into an atypical protein kinase using GTP as donor (By similarity).</text>
</comment>
<comment type="pathway">
    <text evidence="2">Carbohydrate biosynthesis; gluconeogenesis.</text>
</comment>
<comment type="subunit">
    <text evidence="2">Monomer.</text>
</comment>
<comment type="subcellular location">
    <subcellularLocation>
        <location evidence="2">Cytoplasm</location>
    </subcellularLocation>
</comment>
<comment type="PTM">
    <text evidence="2">Phosphorylation at Ser-90 reduces the binding affinity to oxaloacetate and promotes the protein kinase activity.</text>
</comment>
<comment type="miscellaneous">
    <text evidence="3">In eukaryotes there are two isozymes: a cytoplasmic one and a mitochondrial one.</text>
</comment>
<comment type="similarity">
    <text evidence="3">Belongs to the phosphoenolpyruvate carboxykinase [GTP] family.</text>
</comment>
<gene>
    <name evidence="2" type="primary">PCK1</name>
</gene>
<evidence type="ECO:0000250" key="1">
    <source>
        <dbReference type="UniProtKB" id="P07379"/>
    </source>
</evidence>
<evidence type="ECO:0000250" key="2">
    <source>
        <dbReference type="UniProtKB" id="P35558"/>
    </source>
</evidence>
<evidence type="ECO:0000305" key="3"/>
<dbReference type="EC" id="4.1.1.32" evidence="2"/>
<dbReference type="EC" id="2.7.11.-" evidence="2"/>
<dbReference type="EMBL" id="M14229">
    <property type="protein sequence ID" value="AAA49005.1"/>
    <property type="molecule type" value="mRNA"/>
</dbReference>
<dbReference type="PIR" id="A26494">
    <property type="entry name" value="QYCHGC"/>
</dbReference>
<dbReference type="RefSeq" id="NP_990802.1">
    <property type="nucleotide sequence ID" value="NM_205471.1"/>
</dbReference>
<dbReference type="SMR" id="P05153"/>
<dbReference type="FunCoup" id="P05153">
    <property type="interactions" value="94"/>
</dbReference>
<dbReference type="STRING" id="9031.ENSGALP00000012342"/>
<dbReference type="PaxDb" id="9031-ENSGALP00000041760"/>
<dbReference type="GeneID" id="396458"/>
<dbReference type="KEGG" id="gga:396458"/>
<dbReference type="CTD" id="5105"/>
<dbReference type="VEuPathDB" id="HostDB:geneid_396458"/>
<dbReference type="eggNOG" id="KOG3749">
    <property type="taxonomic scope" value="Eukaryota"/>
</dbReference>
<dbReference type="InParanoid" id="P05153"/>
<dbReference type="OrthoDB" id="5841594at2759"/>
<dbReference type="PhylomeDB" id="P05153"/>
<dbReference type="Reactome" id="R-GGA-352875">
    <property type="pathway name" value="Gluconeogenesis"/>
</dbReference>
<dbReference type="SABIO-RK" id="P05153"/>
<dbReference type="UniPathway" id="UPA00138"/>
<dbReference type="PRO" id="PR:P05153"/>
<dbReference type="Proteomes" id="UP000000539">
    <property type="component" value="Unassembled WGS sequence"/>
</dbReference>
<dbReference type="GO" id="GO:0005829">
    <property type="term" value="C:cytosol"/>
    <property type="evidence" value="ECO:0000250"/>
    <property type="project" value="UniProtKB"/>
</dbReference>
<dbReference type="GO" id="GO:0005783">
    <property type="term" value="C:endoplasmic reticulum"/>
    <property type="evidence" value="ECO:0000250"/>
    <property type="project" value="UniProtKB"/>
</dbReference>
<dbReference type="GO" id="GO:0005739">
    <property type="term" value="C:mitochondrion"/>
    <property type="evidence" value="ECO:0000318"/>
    <property type="project" value="GO_Central"/>
</dbReference>
<dbReference type="GO" id="GO:0051379">
    <property type="term" value="F:epinephrine binding"/>
    <property type="evidence" value="ECO:0000314"/>
    <property type="project" value="AgBase"/>
</dbReference>
<dbReference type="GO" id="GO:0005525">
    <property type="term" value="F:GTP binding"/>
    <property type="evidence" value="ECO:0000247"/>
    <property type="project" value="AgBase"/>
</dbReference>
<dbReference type="GO" id="GO:0030145">
    <property type="term" value="F:manganese ion binding"/>
    <property type="evidence" value="ECO:0000318"/>
    <property type="project" value="GO_Central"/>
</dbReference>
<dbReference type="GO" id="GO:0004550">
    <property type="term" value="F:nucleoside diphosphate kinase activity"/>
    <property type="evidence" value="ECO:0000250"/>
    <property type="project" value="AgBase"/>
</dbReference>
<dbReference type="GO" id="GO:0004613">
    <property type="term" value="F:phosphoenolpyruvate carboxykinase (GTP) activity"/>
    <property type="evidence" value="ECO:0000247"/>
    <property type="project" value="AgBase"/>
</dbReference>
<dbReference type="GO" id="GO:0106264">
    <property type="term" value="F:protein serine kinase activity (using GTP as donor)"/>
    <property type="evidence" value="ECO:0000250"/>
    <property type="project" value="UniProtKB"/>
</dbReference>
<dbReference type="GO" id="GO:0008343">
    <property type="term" value="P:adult feeding behavior"/>
    <property type="evidence" value="ECO:0000315"/>
    <property type="project" value="AgBase"/>
</dbReference>
<dbReference type="GO" id="GO:0006522">
    <property type="term" value="P:alanine metabolic process"/>
    <property type="evidence" value="ECO:0000314"/>
    <property type="project" value="AgBase"/>
</dbReference>
<dbReference type="GO" id="GO:0006531">
    <property type="term" value="P:aspartate metabolic process"/>
    <property type="evidence" value="ECO:0000314"/>
    <property type="project" value="AgBase"/>
</dbReference>
<dbReference type="GO" id="GO:0071320">
    <property type="term" value="P:cellular response to cAMP"/>
    <property type="evidence" value="ECO:0000247"/>
    <property type="project" value="AgBase"/>
</dbReference>
<dbReference type="GO" id="GO:0071549">
    <property type="term" value="P:cellular response to dexamethasone stimulus"/>
    <property type="evidence" value="ECO:0000314"/>
    <property type="project" value="AgBase"/>
</dbReference>
<dbReference type="GO" id="GO:0071361">
    <property type="term" value="P:cellular response to ethanol"/>
    <property type="evidence" value="ECO:0000314"/>
    <property type="project" value="AgBase"/>
</dbReference>
<dbReference type="GO" id="GO:0071332">
    <property type="term" value="P:cellular response to fructose stimulus"/>
    <property type="evidence" value="ECO:0000247"/>
    <property type="project" value="AgBase"/>
</dbReference>
<dbReference type="GO" id="GO:0071377">
    <property type="term" value="P:cellular response to glucagon stimulus"/>
    <property type="evidence" value="ECO:0000247"/>
    <property type="project" value="AgBase"/>
</dbReference>
<dbReference type="GO" id="GO:0042149">
    <property type="term" value="P:cellular response to glucose starvation"/>
    <property type="evidence" value="ECO:0000314"/>
    <property type="project" value="AgBase"/>
</dbReference>
<dbReference type="GO" id="GO:0071333">
    <property type="term" value="P:cellular response to glucose stimulus"/>
    <property type="evidence" value="ECO:0000314"/>
    <property type="project" value="AgBase"/>
</dbReference>
<dbReference type="GO" id="GO:0071456">
    <property type="term" value="P:cellular response to hypoxia"/>
    <property type="evidence" value="ECO:0000247"/>
    <property type="project" value="AgBase"/>
</dbReference>
<dbReference type="GO" id="GO:0032869">
    <property type="term" value="P:cellular response to insulin stimulus"/>
    <property type="evidence" value="ECO:0000270"/>
    <property type="project" value="AgBase"/>
</dbReference>
<dbReference type="GO" id="GO:0071347">
    <property type="term" value="P:cellular response to interleukin-1"/>
    <property type="evidence" value="ECO:0000247"/>
    <property type="project" value="AgBase"/>
</dbReference>
<dbReference type="GO" id="GO:0071374">
    <property type="term" value="P:cellular response to parathyroid hormone stimulus"/>
    <property type="evidence" value="ECO:0000314"/>
    <property type="project" value="AgBase"/>
</dbReference>
<dbReference type="GO" id="GO:0071300">
    <property type="term" value="P:cellular response to retinoic acid"/>
    <property type="evidence" value="ECO:0000247"/>
    <property type="project" value="AgBase"/>
</dbReference>
<dbReference type="GO" id="GO:0071356">
    <property type="term" value="P:cellular response to tumor necrosis factor"/>
    <property type="evidence" value="ECO:0000247"/>
    <property type="project" value="AgBase"/>
</dbReference>
<dbReference type="GO" id="GO:0048589">
    <property type="term" value="P:developmental growth"/>
    <property type="evidence" value="ECO:0000314"/>
    <property type="project" value="AgBase"/>
</dbReference>
<dbReference type="GO" id="GO:0007586">
    <property type="term" value="P:digestion"/>
    <property type="evidence" value="ECO:0000304"/>
    <property type="project" value="AgBase"/>
</dbReference>
<dbReference type="GO" id="GO:0018991">
    <property type="term" value="P:egg-laying behavior"/>
    <property type="evidence" value="ECO:0000315"/>
    <property type="project" value="AgBase"/>
</dbReference>
<dbReference type="GO" id="GO:0030703">
    <property type="term" value="P:eggshell formation"/>
    <property type="evidence" value="ECO:0000315"/>
    <property type="project" value="AgBase"/>
</dbReference>
<dbReference type="GO" id="GO:0009792">
    <property type="term" value="P:embryo development ending in birth or egg hatching"/>
    <property type="evidence" value="ECO:0000315"/>
    <property type="project" value="AgBase"/>
</dbReference>
<dbReference type="GO" id="GO:0048562">
    <property type="term" value="P:embryonic organ morphogenesis"/>
    <property type="evidence" value="ECO:0000270"/>
    <property type="project" value="AgBase"/>
</dbReference>
<dbReference type="GO" id="GO:0006094">
    <property type="term" value="P:gluconeogenesis"/>
    <property type="evidence" value="ECO:0000318"/>
    <property type="project" value="GO_Central"/>
</dbReference>
<dbReference type="GO" id="GO:0006536">
    <property type="term" value="P:glutamate metabolic process"/>
    <property type="evidence" value="ECO:0000314"/>
    <property type="project" value="AgBase"/>
</dbReference>
<dbReference type="GO" id="GO:0006541">
    <property type="term" value="P:glutamine metabolic process"/>
    <property type="evidence" value="ECO:0000314"/>
    <property type="project" value="AgBase"/>
</dbReference>
<dbReference type="GO" id="GO:0046327">
    <property type="term" value="P:glycerol biosynthetic process from pyruvate"/>
    <property type="evidence" value="ECO:0000318"/>
    <property type="project" value="GO_Central"/>
</dbReference>
<dbReference type="GO" id="GO:0019563">
    <property type="term" value="P:glycerol catabolic process"/>
    <property type="evidence" value="ECO:0000314"/>
    <property type="project" value="AgBase"/>
</dbReference>
<dbReference type="GO" id="GO:0006544">
    <property type="term" value="P:glycine metabolic process"/>
    <property type="evidence" value="ECO:0000314"/>
    <property type="project" value="AgBase"/>
</dbReference>
<dbReference type="GO" id="GO:0070365">
    <property type="term" value="P:hepatocyte differentiation"/>
    <property type="evidence" value="ECO:0000270"/>
    <property type="project" value="AgBase"/>
</dbReference>
<dbReference type="GO" id="GO:0050892">
    <property type="term" value="P:intestinal absorption"/>
    <property type="evidence" value="ECO:0000304"/>
    <property type="project" value="AgBase"/>
</dbReference>
<dbReference type="GO" id="GO:0006089">
    <property type="term" value="P:lactate metabolic process"/>
    <property type="evidence" value="ECO:0000314"/>
    <property type="project" value="AgBase"/>
</dbReference>
<dbReference type="GO" id="GO:0045912">
    <property type="term" value="P:negative regulation of carbohydrate metabolic process"/>
    <property type="evidence" value="ECO:0000314"/>
    <property type="project" value="AgBase"/>
</dbReference>
<dbReference type="GO" id="GO:0006107">
    <property type="term" value="P:oxaloacetate metabolic process"/>
    <property type="evidence" value="ECO:0000318"/>
    <property type="project" value="GO_Central"/>
</dbReference>
<dbReference type="GO" id="GO:0018105">
    <property type="term" value="P:peptidyl-serine phosphorylation"/>
    <property type="evidence" value="ECO:0000250"/>
    <property type="project" value="UniProtKB"/>
</dbReference>
<dbReference type="GO" id="GO:0045913">
    <property type="term" value="P:positive regulation of carbohydrate metabolic process"/>
    <property type="evidence" value="ECO:0000314"/>
    <property type="project" value="AgBase"/>
</dbReference>
<dbReference type="GO" id="GO:0045722">
    <property type="term" value="P:positive regulation of gluconeogenesis"/>
    <property type="evidence" value="ECO:0000304"/>
    <property type="project" value="AgBase"/>
</dbReference>
<dbReference type="GO" id="GO:0043382">
    <property type="term" value="P:positive regulation of memory T cell differentiation"/>
    <property type="evidence" value="ECO:0000250"/>
    <property type="project" value="UniProtKB"/>
</dbReference>
<dbReference type="GO" id="GO:0006560">
    <property type="term" value="P:proline metabolic process"/>
    <property type="evidence" value="ECO:0000314"/>
    <property type="project" value="AgBase"/>
</dbReference>
<dbReference type="GO" id="GO:0019543">
    <property type="term" value="P:propionate catabolic process"/>
    <property type="evidence" value="ECO:0000314"/>
    <property type="project" value="AgBase"/>
</dbReference>
<dbReference type="GO" id="GO:0006090">
    <property type="term" value="P:pyruvate metabolic process"/>
    <property type="evidence" value="ECO:0000314"/>
    <property type="project" value="AgBase"/>
</dbReference>
<dbReference type="GO" id="GO:0060259">
    <property type="term" value="P:regulation of feeding behavior"/>
    <property type="evidence" value="ECO:0000315"/>
    <property type="project" value="AgBase"/>
</dbReference>
<dbReference type="GO" id="GO:0006111">
    <property type="term" value="P:regulation of gluconeogenesis"/>
    <property type="evidence" value="ECO:0000304"/>
    <property type="project" value="AgBase"/>
</dbReference>
<dbReference type="GO" id="GO:0046890">
    <property type="term" value="P:regulation of lipid biosynthetic process"/>
    <property type="evidence" value="ECO:0000250"/>
    <property type="project" value="UniProtKB"/>
</dbReference>
<dbReference type="GO" id="GO:0046015">
    <property type="term" value="P:regulation of transcription by glucose"/>
    <property type="evidence" value="ECO:0000304"/>
    <property type="project" value="AgBase"/>
</dbReference>
<dbReference type="GO" id="GO:0051591">
    <property type="term" value="P:response to cAMP"/>
    <property type="evidence" value="ECO:0000314"/>
    <property type="project" value="AgBase"/>
</dbReference>
<dbReference type="GO" id="GO:0046898">
    <property type="term" value="P:response to cycloheximide"/>
    <property type="evidence" value="ECO:0000304"/>
    <property type="project" value="AgBase"/>
</dbReference>
<dbReference type="GO" id="GO:0051384">
    <property type="term" value="P:response to glucocorticoid"/>
    <property type="evidence" value="ECO:0000304"/>
    <property type="project" value="AgBase"/>
</dbReference>
<dbReference type="GO" id="GO:0070741">
    <property type="term" value="P:response to interleukin-6"/>
    <property type="evidence" value="ECO:0000247"/>
    <property type="project" value="AgBase"/>
</dbReference>
<dbReference type="GO" id="GO:0033993">
    <property type="term" value="P:response to lipid"/>
    <property type="evidence" value="ECO:0000247"/>
    <property type="project" value="AgBase"/>
</dbReference>
<dbReference type="GO" id="GO:0032496">
    <property type="term" value="P:response to lipopolysaccharide"/>
    <property type="evidence" value="ECO:0000247"/>
    <property type="project" value="AgBase"/>
</dbReference>
<dbReference type="GO" id="GO:1904640">
    <property type="term" value="P:response to methionine"/>
    <property type="evidence" value="ECO:0000247"/>
    <property type="project" value="AgBase"/>
</dbReference>
<dbReference type="GO" id="GO:0042594">
    <property type="term" value="P:response to starvation"/>
    <property type="evidence" value="ECO:0000314"/>
    <property type="project" value="AgBase"/>
</dbReference>
<dbReference type="GO" id="GO:0009069">
    <property type="term" value="P:serine family amino acid metabolic process"/>
    <property type="evidence" value="ECO:0000314"/>
    <property type="project" value="AgBase"/>
</dbReference>
<dbReference type="GO" id="GO:0019953">
    <property type="term" value="P:sexual reproduction"/>
    <property type="evidence" value="ECO:0000315"/>
    <property type="project" value="AgBase"/>
</dbReference>
<dbReference type="GO" id="GO:0007296">
    <property type="term" value="P:vitellogenesis"/>
    <property type="evidence" value="ECO:0000315"/>
    <property type="project" value="AgBase"/>
</dbReference>
<dbReference type="CDD" id="cd00819">
    <property type="entry name" value="PEPCK_GTP"/>
    <property type="match status" value="1"/>
</dbReference>
<dbReference type="FunFam" id="3.90.228.20:FF:000005">
    <property type="entry name" value="Phosphoenolpyruvate carboxykinase [GTP], mitochondrial"/>
    <property type="match status" value="1"/>
</dbReference>
<dbReference type="FunFam" id="2.170.8.10:FF:000006">
    <property type="entry name" value="Phosphoenolpyruvate carboxykinase, cytosolic [GTP]"/>
    <property type="match status" value="1"/>
</dbReference>
<dbReference type="FunFam" id="3.40.449.10:FF:000003">
    <property type="entry name" value="Phosphoenolpyruvate carboxykinase, cytosolic [GTP]"/>
    <property type="match status" value="1"/>
</dbReference>
<dbReference type="Gene3D" id="3.90.228.20">
    <property type="match status" value="1"/>
</dbReference>
<dbReference type="Gene3D" id="3.40.449.10">
    <property type="entry name" value="Phosphoenolpyruvate Carboxykinase, domain 1"/>
    <property type="match status" value="1"/>
</dbReference>
<dbReference type="Gene3D" id="2.170.8.10">
    <property type="entry name" value="Phosphoenolpyruvate Carboxykinase, domain 2"/>
    <property type="match status" value="1"/>
</dbReference>
<dbReference type="HAMAP" id="MF_00452">
    <property type="entry name" value="PEPCK_GTP"/>
    <property type="match status" value="1"/>
</dbReference>
<dbReference type="InterPro" id="IPR018091">
    <property type="entry name" value="PEP_carboxykin_GTP_CS"/>
</dbReference>
<dbReference type="InterPro" id="IPR013035">
    <property type="entry name" value="PEP_carboxykinase_C"/>
</dbReference>
<dbReference type="InterPro" id="IPR008209">
    <property type="entry name" value="PEP_carboxykinase_GTP"/>
</dbReference>
<dbReference type="InterPro" id="IPR035077">
    <property type="entry name" value="PEP_carboxykinase_GTP_C"/>
</dbReference>
<dbReference type="InterPro" id="IPR035078">
    <property type="entry name" value="PEP_carboxykinase_GTP_N"/>
</dbReference>
<dbReference type="InterPro" id="IPR008210">
    <property type="entry name" value="PEP_carboxykinase_N"/>
</dbReference>
<dbReference type="NCBIfam" id="NF003253">
    <property type="entry name" value="PRK04210.1"/>
    <property type="match status" value="1"/>
</dbReference>
<dbReference type="PANTHER" id="PTHR11561">
    <property type="entry name" value="PHOSPHOENOLPYRUVATE CARBOXYKINASE"/>
    <property type="match status" value="1"/>
</dbReference>
<dbReference type="PANTHER" id="PTHR11561:SF18">
    <property type="entry name" value="PHOSPHOENOLPYRUVATE CARBOXYKINASE, CYTOSOLIC [GTP]"/>
    <property type="match status" value="1"/>
</dbReference>
<dbReference type="Pfam" id="PF00821">
    <property type="entry name" value="PEPCK_GTP"/>
    <property type="match status" value="1"/>
</dbReference>
<dbReference type="Pfam" id="PF17297">
    <property type="entry name" value="PEPCK_N"/>
    <property type="match status" value="1"/>
</dbReference>
<dbReference type="PIRSF" id="PIRSF001348">
    <property type="entry name" value="PEP_carboxykinase_GTP"/>
    <property type="match status" value="1"/>
</dbReference>
<dbReference type="SUPFAM" id="SSF68923">
    <property type="entry name" value="PEP carboxykinase N-terminal domain"/>
    <property type="match status" value="1"/>
</dbReference>
<dbReference type="SUPFAM" id="SSF53795">
    <property type="entry name" value="PEP carboxykinase-like"/>
    <property type="match status" value="1"/>
</dbReference>
<dbReference type="PROSITE" id="PS00505">
    <property type="entry name" value="PEPCK_GTP"/>
    <property type="match status" value="1"/>
</dbReference>
<organism>
    <name type="scientific">Gallus gallus</name>
    <name type="common">Chicken</name>
    <dbReference type="NCBI Taxonomy" id="9031"/>
    <lineage>
        <taxon>Eukaryota</taxon>
        <taxon>Metazoa</taxon>
        <taxon>Chordata</taxon>
        <taxon>Craniata</taxon>
        <taxon>Vertebrata</taxon>
        <taxon>Euteleostomi</taxon>
        <taxon>Archelosauria</taxon>
        <taxon>Archosauria</taxon>
        <taxon>Dinosauria</taxon>
        <taxon>Saurischia</taxon>
        <taxon>Theropoda</taxon>
        <taxon>Coelurosauria</taxon>
        <taxon>Aves</taxon>
        <taxon>Neognathae</taxon>
        <taxon>Galloanserae</taxon>
        <taxon>Galliformes</taxon>
        <taxon>Phasianidae</taxon>
        <taxon>Phasianinae</taxon>
        <taxon>Gallus</taxon>
    </lineage>
</organism>
<reference key="1">
    <citation type="journal article" date="1986" name="Proc. Natl. Acad. Sci. U.S.A.">
        <title>Nucleotide sequence of the mRNA encoding the cytosolic form of phosphoenolpyruvate carboxykinase (GTP) from the chicken.</title>
        <authorList>
            <person name="Cook J.S."/>
            <person name="Weldon S.L."/>
            <person name="Garcia-Ruiz J.P."/>
            <person name="Hod Y."/>
            <person name="Hanson R.W."/>
        </authorList>
    </citation>
    <scope>NUCLEOTIDE SEQUENCE [MRNA]</scope>
</reference>
<protein>
    <recommendedName>
        <fullName evidence="3">Phosphoenolpyruvate carboxykinase, cytosolic [GTP]</fullName>
        <shortName>PEPCK-C</shortName>
        <ecNumber evidence="2">4.1.1.32</ecNumber>
    </recommendedName>
    <alternativeName>
        <fullName evidence="3">Serine-protein kinase PCK1</fullName>
        <ecNumber evidence="2">2.7.11.-</ecNumber>
    </alternativeName>
</protein>
<keyword id="KW-0963">Cytoplasm</keyword>
<keyword id="KW-0210">Decarboxylase</keyword>
<keyword id="KW-0312">Gluconeogenesis</keyword>
<keyword id="KW-0342">GTP-binding</keyword>
<keyword id="KW-0418">Kinase</keyword>
<keyword id="KW-0456">Lyase</keyword>
<keyword id="KW-0464">Manganese</keyword>
<keyword id="KW-0479">Metal-binding</keyword>
<keyword id="KW-0547">Nucleotide-binding</keyword>
<keyword id="KW-0597">Phosphoprotein</keyword>
<keyword id="KW-1185">Reference proteome</keyword>
<keyword id="KW-0808">Transferase</keyword>
<accession>P05153</accession>
<feature type="chain" id="PRO_0000103631" description="Phosphoenolpyruvate carboxykinase, cytosolic [GTP]">
    <location>
        <begin position="1"/>
        <end position="622"/>
    </location>
</feature>
<feature type="region of interest" description="Omega-loop" evidence="1">
    <location>
        <begin position="457"/>
        <end position="487"/>
    </location>
</feature>
<feature type="active site" evidence="1">
    <location>
        <position position="288"/>
    </location>
</feature>
<feature type="binding site" evidence="1">
    <location>
        <position position="87"/>
    </location>
    <ligand>
        <name>substrate</name>
    </ligand>
</feature>
<feature type="binding site" evidence="1">
    <location>
        <begin position="235"/>
        <end position="237"/>
    </location>
    <ligand>
        <name>substrate</name>
    </ligand>
</feature>
<feature type="binding site" evidence="1">
    <location>
        <position position="244"/>
    </location>
    <ligand>
        <name>Mn(2+)</name>
        <dbReference type="ChEBI" id="CHEBI:29035"/>
    </ligand>
</feature>
<feature type="binding site" evidence="1">
    <location>
        <position position="264"/>
    </location>
    <ligand>
        <name>Mn(2+)</name>
        <dbReference type="ChEBI" id="CHEBI:29035"/>
    </ligand>
</feature>
<feature type="binding site" evidence="1">
    <location>
        <position position="286"/>
    </location>
    <ligand>
        <name>substrate</name>
    </ligand>
</feature>
<feature type="binding site" evidence="1">
    <location>
        <begin position="287"/>
        <end position="292"/>
    </location>
    <ligand>
        <name>GTP</name>
        <dbReference type="ChEBI" id="CHEBI:37565"/>
    </ligand>
</feature>
<feature type="binding site" evidence="1">
    <location>
        <position position="311"/>
    </location>
    <ligand>
        <name>Mn(2+)</name>
        <dbReference type="ChEBI" id="CHEBI:29035"/>
    </ligand>
</feature>
<feature type="binding site" evidence="1">
    <location>
        <begin position="403"/>
        <end position="405"/>
    </location>
    <ligand>
        <name>substrate</name>
    </ligand>
</feature>
<feature type="binding site" evidence="1">
    <location>
        <position position="405"/>
    </location>
    <ligand>
        <name>GTP</name>
        <dbReference type="ChEBI" id="CHEBI:37565"/>
    </ligand>
</feature>
<feature type="binding site" evidence="1">
    <location>
        <position position="436"/>
    </location>
    <ligand>
        <name>GTP</name>
        <dbReference type="ChEBI" id="CHEBI:37565"/>
    </ligand>
</feature>
<feature type="binding site" evidence="1">
    <location>
        <begin position="530"/>
        <end position="533"/>
    </location>
    <ligand>
        <name>GTP</name>
        <dbReference type="ChEBI" id="CHEBI:37565"/>
    </ligand>
</feature>
<feature type="modified residue" description="Phosphoserine" evidence="2">
    <location>
        <position position="90"/>
    </location>
</feature>
<sequence length="622" mass="69528">MAPELKTEVNIISKVIQGDLESLPPQVREFIESNAKLCQPESIHICDGSEEENKKILDIMVEQGMIKKLSKYENCWLALTNPRDVARIESKTVIITQEQRDTIPIPKTGSSQLGRWMSEEDFEKAFNTRFPGCMQGRTMYVIPFSMGPIGSPLAKIGIELTDSPYVVASMRMMTRMGTAALKALGNGEFVKCLHSVGCPLPLKEPLINNWPCNPELTLIAHLPDRREIISFGSGYGGNSLLGKKCFALRIASRIAKEEGWLAEHMLILGITNPEGEKKYFAAAFPSACGKTNLAMMNPSRPGWKIECVGDDIAWMKFDELGNLRAINPENGFFGVAPGTSIKTNPNAIKTIFKNTIFTNVAETSDGGVYWEGIDEPLPPGVTLTSWKNKDWTPDNGEPCAHPNSRFCTPASQCPIMDPAWESPEGVPIEGIIFGGRRPAGVPLVYEAFNWQHGVFIGAAMRSEATAAAEHKGKIIMHDPFAMRPFFGYNFGKYLAHWLSMAHRPAAKLPRIFHVNWFRKDSQGKFLWPGYGENSRVLEWMFNRIQGKASAKSTAIGYIPADTALNLKGLEDINLTELFNISKEFWEKEVEEIKQYFEGQVNADLPYEIERELLALEMRIKQL</sequence>